<proteinExistence type="inferred from homology"/>
<comment type="function">
    <text evidence="1">Catalyzes the reversible adenylation of nicotinate mononucleotide (NaMN) to nicotinic acid adenine dinucleotide (NaAD).</text>
</comment>
<comment type="catalytic activity">
    <reaction evidence="1">
        <text>nicotinate beta-D-ribonucleotide + ATP + H(+) = deamido-NAD(+) + diphosphate</text>
        <dbReference type="Rhea" id="RHEA:22860"/>
        <dbReference type="ChEBI" id="CHEBI:15378"/>
        <dbReference type="ChEBI" id="CHEBI:30616"/>
        <dbReference type="ChEBI" id="CHEBI:33019"/>
        <dbReference type="ChEBI" id="CHEBI:57502"/>
        <dbReference type="ChEBI" id="CHEBI:58437"/>
        <dbReference type="EC" id="2.7.7.18"/>
    </reaction>
</comment>
<comment type="pathway">
    <text evidence="1">Cofactor biosynthesis; NAD(+) biosynthesis; deamido-NAD(+) from nicotinate D-ribonucleotide: step 1/1.</text>
</comment>
<comment type="similarity">
    <text evidence="1">Belongs to the NadD family.</text>
</comment>
<evidence type="ECO:0000255" key="1">
    <source>
        <dbReference type="HAMAP-Rule" id="MF_00244"/>
    </source>
</evidence>
<accession>Q5WHI0</accession>
<name>NADD_SHOC1</name>
<dbReference type="EC" id="2.7.7.18" evidence="1"/>
<dbReference type="EMBL" id="AP006627">
    <property type="protein sequence ID" value="BAD64175.1"/>
    <property type="molecule type" value="Genomic_DNA"/>
</dbReference>
<dbReference type="RefSeq" id="WP_011246484.1">
    <property type="nucleotide sequence ID" value="NC_006582.1"/>
</dbReference>
<dbReference type="SMR" id="Q5WHI0"/>
<dbReference type="STRING" id="66692.ABC1640"/>
<dbReference type="KEGG" id="bcl:ABC1640"/>
<dbReference type="eggNOG" id="COG1057">
    <property type="taxonomic scope" value="Bacteria"/>
</dbReference>
<dbReference type="HOGENOM" id="CLU_069765_3_1_9"/>
<dbReference type="OrthoDB" id="5295945at2"/>
<dbReference type="UniPathway" id="UPA00253">
    <property type="reaction ID" value="UER00332"/>
</dbReference>
<dbReference type="Proteomes" id="UP000001168">
    <property type="component" value="Chromosome"/>
</dbReference>
<dbReference type="GO" id="GO:0005524">
    <property type="term" value="F:ATP binding"/>
    <property type="evidence" value="ECO:0007669"/>
    <property type="project" value="UniProtKB-KW"/>
</dbReference>
<dbReference type="GO" id="GO:0004515">
    <property type="term" value="F:nicotinate-nucleotide adenylyltransferase activity"/>
    <property type="evidence" value="ECO:0007669"/>
    <property type="project" value="UniProtKB-UniRule"/>
</dbReference>
<dbReference type="GO" id="GO:0009435">
    <property type="term" value="P:NAD biosynthetic process"/>
    <property type="evidence" value="ECO:0007669"/>
    <property type="project" value="UniProtKB-UniRule"/>
</dbReference>
<dbReference type="CDD" id="cd02165">
    <property type="entry name" value="NMNAT"/>
    <property type="match status" value="1"/>
</dbReference>
<dbReference type="Gene3D" id="3.40.50.620">
    <property type="entry name" value="HUPs"/>
    <property type="match status" value="1"/>
</dbReference>
<dbReference type="HAMAP" id="MF_00244">
    <property type="entry name" value="NaMN_adenylyltr"/>
    <property type="match status" value="1"/>
</dbReference>
<dbReference type="InterPro" id="IPR004821">
    <property type="entry name" value="Cyt_trans-like"/>
</dbReference>
<dbReference type="InterPro" id="IPR005248">
    <property type="entry name" value="NadD/NMNAT"/>
</dbReference>
<dbReference type="InterPro" id="IPR014729">
    <property type="entry name" value="Rossmann-like_a/b/a_fold"/>
</dbReference>
<dbReference type="NCBIfam" id="TIGR00125">
    <property type="entry name" value="cyt_tran_rel"/>
    <property type="match status" value="1"/>
</dbReference>
<dbReference type="NCBIfam" id="TIGR00482">
    <property type="entry name" value="nicotinate (nicotinamide) nucleotide adenylyltransferase"/>
    <property type="match status" value="1"/>
</dbReference>
<dbReference type="NCBIfam" id="NF000840">
    <property type="entry name" value="PRK00071.1-3"/>
    <property type="match status" value="1"/>
</dbReference>
<dbReference type="NCBIfam" id="NF000841">
    <property type="entry name" value="PRK00071.1-4"/>
    <property type="match status" value="1"/>
</dbReference>
<dbReference type="PANTHER" id="PTHR39321">
    <property type="entry name" value="NICOTINATE-NUCLEOTIDE ADENYLYLTRANSFERASE-RELATED"/>
    <property type="match status" value="1"/>
</dbReference>
<dbReference type="PANTHER" id="PTHR39321:SF3">
    <property type="entry name" value="PHOSPHOPANTETHEINE ADENYLYLTRANSFERASE"/>
    <property type="match status" value="1"/>
</dbReference>
<dbReference type="Pfam" id="PF01467">
    <property type="entry name" value="CTP_transf_like"/>
    <property type="match status" value="1"/>
</dbReference>
<dbReference type="SUPFAM" id="SSF52374">
    <property type="entry name" value="Nucleotidylyl transferase"/>
    <property type="match status" value="1"/>
</dbReference>
<feature type="chain" id="PRO_0000181386" description="Probable nicotinate-nucleotide adenylyltransferase">
    <location>
        <begin position="1"/>
        <end position="192"/>
    </location>
</feature>
<sequence length="192" mass="21880">MKRIGLFGGTFDPPHLGHLLIAQEALTAVKLDEVWFVPVSTPPHKERAGLTSGKDRYDMVKAALVQEERFRVCDIELIRKGKSYTIDTVRELKQTYPDDEFFFLIGGDMVNMLPEWRGIDELKQLVTFVAFNRPGASAKSQPDVHFVPFVEVNISSSLIRERLAKGKPIRYFVTPAVEQLIEERNLYGDNNE</sequence>
<keyword id="KW-0067">ATP-binding</keyword>
<keyword id="KW-0520">NAD</keyword>
<keyword id="KW-0547">Nucleotide-binding</keyword>
<keyword id="KW-0548">Nucleotidyltransferase</keyword>
<keyword id="KW-0662">Pyridine nucleotide biosynthesis</keyword>
<keyword id="KW-1185">Reference proteome</keyword>
<keyword id="KW-0808">Transferase</keyword>
<protein>
    <recommendedName>
        <fullName evidence="1">Probable nicotinate-nucleotide adenylyltransferase</fullName>
        <ecNumber evidence="1">2.7.7.18</ecNumber>
    </recommendedName>
    <alternativeName>
        <fullName evidence="1">Deamido-NAD(+) diphosphorylase</fullName>
    </alternativeName>
    <alternativeName>
        <fullName evidence="1">Deamido-NAD(+) pyrophosphorylase</fullName>
    </alternativeName>
    <alternativeName>
        <fullName evidence="1">Nicotinate mononucleotide adenylyltransferase</fullName>
        <shortName evidence="1">NaMN adenylyltransferase</shortName>
    </alternativeName>
</protein>
<organism>
    <name type="scientific">Shouchella clausii (strain KSM-K16)</name>
    <name type="common">Alkalihalobacillus clausii</name>
    <dbReference type="NCBI Taxonomy" id="66692"/>
    <lineage>
        <taxon>Bacteria</taxon>
        <taxon>Bacillati</taxon>
        <taxon>Bacillota</taxon>
        <taxon>Bacilli</taxon>
        <taxon>Bacillales</taxon>
        <taxon>Bacillaceae</taxon>
        <taxon>Shouchella</taxon>
    </lineage>
</organism>
<gene>
    <name evidence="1" type="primary">nadD</name>
    <name type="ordered locus">ABC1640</name>
</gene>
<reference key="1">
    <citation type="submission" date="2003-10" db="EMBL/GenBank/DDBJ databases">
        <title>The complete genome sequence of the alkaliphilic Bacillus clausii KSM-K16.</title>
        <authorList>
            <person name="Takaki Y."/>
            <person name="Kageyama Y."/>
            <person name="Shimamura S."/>
            <person name="Suzuki H."/>
            <person name="Nishi S."/>
            <person name="Hatada Y."/>
            <person name="Kawai S."/>
            <person name="Ito S."/>
            <person name="Horikoshi K."/>
        </authorList>
    </citation>
    <scope>NUCLEOTIDE SEQUENCE [LARGE SCALE GENOMIC DNA]</scope>
    <source>
        <strain>KSM-K16</strain>
    </source>
</reference>